<reference key="1">
    <citation type="journal article" date="2001" name="Proc. Natl. Acad. Sci. U.S.A.">
        <title>Complete genome sequence of an M1 strain of Streptococcus pyogenes.</title>
        <authorList>
            <person name="Ferretti J.J."/>
            <person name="McShan W.M."/>
            <person name="Ajdic D.J."/>
            <person name="Savic D.J."/>
            <person name="Savic G."/>
            <person name="Lyon K."/>
            <person name="Primeaux C."/>
            <person name="Sezate S."/>
            <person name="Suvorov A.N."/>
            <person name="Kenton S."/>
            <person name="Lai H.S."/>
            <person name="Lin S.P."/>
            <person name="Qian Y."/>
            <person name="Jia H.G."/>
            <person name="Najar F.Z."/>
            <person name="Ren Q."/>
            <person name="Zhu H."/>
            <person name="Song L."/>
            <person name="White J."/>
            <person name="Yuan X."/>
            <person name="Clifton S.W."/>
            <person name="Roe B.A."/>
            <person name="McLaughlin R.E."/>
        </authorList>
    </citation>
    <scope>NUCLEOTIDE SEQUENCE [LARGE SCALE GENOMIC DNA]</scope>
    <source>
        <strain>ATCC 700294 / SF370 / Serotype M1</strain>
    </source>
</reference>
<reference key="2">
    <citation type="journal article" date="2005" name="J. Infect. Dis.">
        <title>Evolutionary origin and emergence of a highly successful clone of serotype M1 group A Streptococcus involved multiple horizontal gene transfer events.</title>
        <authorList>
            <person name="Sumby P."/>
            <person name="Porcella S.F."/>
            <person name="Madrigal A.G."/>
            <person name="Barbian K.D."/>
            <person name="Virtaneva K."/>
            <person name="Ricklefs S.M."/>
            <person name="Sturdevant D.E."/>
            <person name="Graham M.R."/>
            <person name="Vuopio-Varkila J."/>
            <person name="Hoe N.P."/>
            <person name="Musser J.M."/>
        </authorList>
    </citation>
    <scope>NUCLEOTIDE SEQUENCE [LARGE SCALE GENOMIC DNA]</scope>
    <source>
        <strain>ATCC BAA-947 / MGAS5005 / Serotype M1</strain>
    </source>
</reference>
<keyword id="KW-0963">Cytoplasm</keyword>
<keyword id="KW-0274">FAD</keyword>
<keyword id="KW-0285">Flavoprotein</keyword>
<keyword id="KW-0319">Glycerol metabolism</keyword>
<keyword id="KW-0560">Oxidoreductase</keyword>
<keyword id="KW-1185">Reference proteome</keyword>
<dbReference type="EC" id="1.1.3.21"/>
<dbReference type="EMBL" id="AE004092">
    <property type="protein sequence ID" value="AAK34439.1"/>
    <property type="molecule type" value="Genomic_DNA"/>
</dbReference>
<dbReference type="EMBL" id="CP000017">
    <property type="protein sequence ID" value="AAZ51998.1"/>
    <property type="molecule type" value="Genomic_DNA"/>
</dbReference>
<dbReference type="RefSeq" id="NP_269718.1">
    <property type="nucleotide sequence ID" value="NC_002737.2"/>
</dbReference>
<dbReference type="SMR" id="Q99YI8"/>
<dbReference type="PaxDb" id="1314-HKU360_01432"/>
<dbReference type="KEGG" id="spy:SPy_1683"/>
<dbReference type="KEGG" id="spz:M5005_Spy1380"/>
<dbReference type="PATRIC" id="fig|160490.10.peg.1464"/>
<dbReference type="HOGENOM" id="CLU_015740_5_2_9"/>
<dbReference type="OMA" id="PHIVKPM"/>
<dbReference type="Proteomes" id="UP000000750">
    <property type="component" value="Chromosome"/>
</dbReference>
<dbReference type="GO" id="GO:0005737">
    <property type="term" value="C:cytoplasm"/>
    <property type="evidence" value="ECO:0007669"/>
    <property type="project" value="UniProtKB-SubCell"/>
</dbReference>
<dbReference type="GO" id="GO:0004368">
    <property type="term" value="F:glycerol-3-phosphate dehydrogenase (quinone) activity"/>
    <property type="evidence" value="ECO:0007669"/>
    <property type="project" value="InterPro"/>
</dbReference>
<dbReference type="GO" id="GO:0004369">
    <property type="term" value="F:glycerol-3-phosphate oxidase activity"/>
    <property type="evidence" value="ECO:0007669"/>
    <property type="project" value="UniProtKB-EC"/>
</dbReference>
<dbReference type="GO" id="GO:0006071">
    <property type="term" value="P:glycerol metabolic process"/>
    <property type="evidence" value="ECO:0007669"/>
    <property type="project" value="UniProtKB-KW"/>
</dbReference>
<dbReference type="GO" id="GO:0046168">
    <property type="term" value="P:glycerol-3-phosphate catabolic process"/>
    <property type="evidence" value="ECO:0007669"/>
    <property type="project" value="TreeGrafter"/>
</dbReference>
<dbReference type="Gene3D" id="1.10.8.870">
    <property type="entry name" value="Alpha-glycerophosphate oxidase, cap domain"/>
    <property type="match status" value="1"/>
</dbReference>
<dbReference type="Gene3D" id="3.30.9.10">
    <property type="entry name" value="D-Amino Acid Oxidase, subunit A, domain 2"/>
    <property type="match status" value="1"/>
</dbReference>
<dbReference type="Gene3D" id="3.50.50.60">
    <property type="entry name" value="FAD/NAD(P)-binding domain"/>
    <property type="match status" value="1"/>
</dbReference>
<dbReference type="InterPro" id="IPR031656">
    <property type="entry name" value="DAO_C"/>
</dbReference>
<dbReference type="InterPro" id="IPR038299">
    <property type="entry name" value="DAO_C_sf"/>
</dbReference>
<dbReference type="InterPro" id="IPR006076">
    <property type="entry name" value="FAD-dep_OxRdtase"/>
</dbReference>
<dbReference type="InterPro" id="IPR036188">
    <property type="entry name" value="FAD/NAD-bd_sf"/>
</dbReference>
<dbReference type="InterPro" id="IPR000447">
    <property type="entry name" value="G3P_DH_FAD-dep"/>
</dbReference>
<dbReference type="NCBIfam" id="NF033461">
    <property type="entry name" value="glycerol3P_ox_1"/>
    <property type="match status" value="1"/>
</dbReference>
<dbReference type="PANTHER" id="PTHR11985:SF35">
    <property type="entry name" value="ANAEROBIC GLYCEROL-3-PHOSPHATE DEHYDROGENASE SUBUNIT A"/>
    <property type="match status" value="1"/>
</dbReference>
<dbReference type="PANTHER" id="PTHR11985">
    <property type="entry name" value="GLYCEROL-3-PHOSPHATE DEHYDROGENASE"/>
    <property type="match status" value="1"/>
</dbReference>
<dbReference type="Pfam" id="PF01266">
    <property type="entry name" value="DAO"/>
    <property type="match status" value="1"/>
</dbReference>
<dbReference type="Pfam" id="PF16901">
    <property type="entry name" value="DAO_C"/>
    <property type="match status" value="1"/>
</dbReference>
<dbReference type="PRINTS" id="PR01001">
    <property type="entry name" value="FADG3PDH"/>
</dbReference>
<dbReference type="SUPFAM" id="SSF54373">
    <property type="entry name" value="FAD-linked reductases, C-terminal domain"/>
    <property type="match status" value="1"/>
</dbReference>
<dbReference type="SUPFAM" id="SSF51905">
    <property type="entry name" value="FAD/NAD(P)-binding domain"/>
    <property type="match status" value="1"/>
</dbReference>
<dbReference type="PROSITE" id="PS00977">
    <property type="entry name" value="FAD_G3PDH_1"/>
    <property type="match status" value="1"/>
</dbReference>
<name>GLPO_STRP1</name>
<gene>
    <name type="primary">glpO</name>
    <name type="ordered locus">SPy_1683</name>
    <name type="ordered locus">M5005_Spy1380</name>
</gene>
<accession>Q99YI8</accession>
<accession>Q48XC7</accession>
<sequence>MEFSRETRRLALQKMQERDLDLLIIGGGITGAGVALQAAASGLDTGLIEMQDFAQGTSSRSTKLVHGGLRYLKQFDVEVVSDTVSERAVVQQIAPHIPKPDPMLLPVYDEPGSTFSMFRLKVAMDLYDLLAGVSNTPAANKVLTKEEVLKREPDLKQEGLLGGGVYLDFRNNDARLVIENIKRANRDGALIASHVKAEDFLLDDNGKIIGVKARDLLSDQEIIIKAKLVINTTGPWSDEIRQFSHKGQPIHQMRPTKGVHLVVDRQKLPVSQPVYVDTGLNDGRMVFVLPREEKTYFGTTDTDYTGDLEHPQVTQEDVDYLLGVVNNRFPNANVTIDDIESSWAGLRPLLSGNSASDYNGGNSGKVSDDSFDHLVDTVKAYINHEDSREAVEKAIKQVETSTSEKELDPSAVSRGSSFERDENGLFTLAGGKITDYRKMAEGALTGIIQILKEEFGKSFKLINSKTYPVSGGEINPANVDSEIEAYAQLGTLSGLSMDDARYLANLYGSNAPKVFALTRQLTAAEGLSLAETLSLHYAMDYEMALKPTDYFLRRTNHLLFMRDSLDALIDPVINEMAKHFEWSDQERVAQEDDLRRVIADNDLSALKGHQEG</sequence>
<protein>
    <recommendedName>
        <fullName>Alpha-glycerophosphate oxidase</fullName>
        <ecNumber>1.1.3.21</ecNumber>
    </recommendedName>
    <alternativeName>
        <fullName>Glycerol-3-phosphate oxidase</fullName>
    </alternativeName>
</protein>
<comment type="catalytic activity">
    <reaction>
        <text>sn-glycerol 3-phosphate + O2 = dihydroxyacetone phosphate + H2O2</text>
        <dbReference type="Rhea" id="RHEA:18369"/>
        <dbReference type="ChEBI" id="CHEBI:15379"/>
        <dbReference type="ChEBI" id="CHEBI:16240"/>
        <dbReference type="ChEBI" id="CHEBI:57597"/>
        <dbReference type="ChEBI" id="CHEBI:57642"/>
        <dbReference type="EC" id="1.1.3.21"/>
    </reaction>
</comment>
<comment type="cofactor">
    <cofactor evidence="1">
        <name>FAD</name>
        <dbReference type="ChEBI" id="CHEBI:57692"/>
    </cofactor>
</comment>
<comment type="subcellular location">
    <subcellularLocation>
        <location evidence="1">Cytoplasm</location>
    </subcellularLocation>
</comment>
<comment type="similarity">
    <text evidence="4">Belongs to the FAD-dependent glycerol-3-phosphate dehydrogenase family.</text>
</comment>
<comment type="caution">
    <text evidence="4">As S.pyogenes is unable to produce acid from glycerol, the significance and/or function of the glpO gene in this organism is at present unknown.</text>
</comment>
<organism>
    <name type="scientific">Streptococcus pyogenes serotype M1</name>
    <dbReference type="NCBI Taxonomy" id="301447"/>
    <lineage>
        <taxon>Bacteria</taxon>
        <taxon>Bacillati</taxon>
        <taxon>Bacillota</taxon>
        <taxon>Bacilli</taxon>
        <taxon>Lactobacillales</taxon>
        <taxon>Streptococcaceae</taxon>
        <taxon>Streptococcus</taxon>
    </lineage>
</organism>
<feature type="chain" id="PRO_0000126110" description="Alpha-glycerophosphate oxidase">
    <location>
        <begin position="1"/>
        <end position="612"/>
    </location>
</feature>
<feature type="region of interest" description="Disordered" evidence="3">
    <location>
        <begin position="399"/>
        <end position="418"/>
    </location>
</feature>
<feature type="compositionally biased region" description="Basic and acidic residues" evidence="3">
    <location>
        <begin position="399"/>
        <end position="408"/>
    </location>
</feature>
<feature type="binding site" evidence="2">
    <location>
        <begin position="21"/>
        <end position="49"/>
    </location>
    <ligand>
        <name>FAD</name>
        <dbReference type="ChEBI" id="CHEBI:57692"/>
    </ligand>
</feature>
<proteinExistence type="inferred from homology"/>
<evidence type="ECO:0000250" key="1"/>
<evidence type="ECO:0000255" key="2"/>
<evidence type="ECO:0000256" key="3">
    <source>
        <dbReference type="SAM" id="MobiDB-lite"/>
    </source>
</evidence>
<evidence type="ECO:0000305" key="4"/>